<feature type="chain" id="PRO_1000057507" description="Ribosomal RNA small subunit methyltransferase G">
    <location>
        <begin position="1"/>
        <end position="207"/>
    </location>
</feature>
<feature type="binding site" evidence="1">
    <location>
        <position position="73"/>
    </location>
    <ligand>
        <name>S-adenosyl-L-methionine</name>
        <dbReference type="ChEBI" id="CHEBI:59789"/>
    </ligand>
</feature>
<feature type="binding site" evidence="1">
    <location>
        <position position="78"/>
    </location>
    <ligand>
        <name>S-adenosyl-L-methionine</name>
        <dbReference type="ChEBI" id="CHEBI:59789"/>
    </ligand>
</feature>
<feature type="binding site" evidence="1">
    <location>
        <begin position="124"/>
        <end position="125"/>
    </location>
    <ligand>
        <name>S-adenosyl-L-methionine</name>
        <dbReference type="ChEBI" id="CHEBI:59789"/>
    </ligand>
</feature>
<feature type="binding site" evidence="1">
    <location>
        <position position="139"/>
    </location>
    <ligand>
        <name>S-adenosyl-L-methionine</name>
        <dbReference type="ChEBI" id="CHEBI:59789"/>
    </ligand>
</feature>
<organism>
    <name type="scientific">Enterobacter sp. (strain 638)</name>
    <dbReference type="NCBI Taxonomy" id="399742"/>
    <lineage>
        <taxon>Bacteria</taxon>
        <taxon>Pseudomonadati</taxon>
        <taxon>Pseudomonadota</taxon>
        <taxon>Gammaproteobacteria</taxon>
        <taxon>Enterobacterales</taxon>
        <taxon>Enterobacteriaceae</taxon>
        <taxon>Enterobacter</taxon>
    </lineage>
</organism>
<proteinExistence type="inferred from homology"/>
<gene>
    <name evidence="1" type="primary">rsmG</name>
    <name type="ordered locus">Ent638_4124</name>
</gene>
<accession>A4WGE7</accession>
<keyword id="KW-0963">Cytoplasm</keyword>
<keyword id="KW-0489">Methyltransferase</keyword>
<keyword id="KW-0698">rRNA processing</keyword>
<keyword id="KW-0949">S-adenosyl-L-methionine</keyword>
<keyword id="KW-0808">Transferase</keyword>
<reference key="1">
    <citation type="journal article" date="2010" name="PLoS Genet.">
        <title>Genome sequence of the plant growth promoting endophytic bacterium Enterobacter sp. 638.</title>
        <authorList>
            <person name="Taghavi S."/>
            <person name="van der Lelie D."/>
            <person name="Hoffman A."/>
            <person name="Zhang Y.B."/>
            <person name="Walla M.D."/>
            <person name="Vangronsveld J."/>
            <person name="Newman L."/>
            <person name="Monchy S."/>
        </authorList>
    </citation>
    <scope>NUCLEOTIDE SEQUENCE [LARGE SCALE GENOMIC DNA]</scope>
    <source>
        <strain>638</strain>
    </source>
</reference>
<name>RSMG_ENT38</name>
<evidence type="ECO:0000255" key="1">
    <source>
        <dbReference type="HAMAP-Rule" id="MF_00074"/>
    </source>
</evidence>
<comment type="function">
    <text evidence="1">Specifically methylates the N7 position of guanine in position 527 of 16S rRNA.</text>
</comment>
<comment type="catalytic activity">
    <reaction evidence="1">
        <text>guanosine(527) in 16S rRNA + S-adenosyl-L-methionine = N(7)-methylguanosine(527) in 16S rRNA + S-adenosyl-L-homocysteine</text>
        <dbReference type="Rhea" id="RHEA:42732"/>
        <dbReference type="Rhea" id="RHEA-COMP:10209"/>
        <dbReference type="Rhea" id="RHEA-COMP:10210"/>
        <dbReference type="ChEBI" id="CHEBI:57856"/>
        <dbReference type="ChEBI" id="CHEBI:59789"/>
        <dbReference type="ChEBI" id="CHEBI:74269"/>
        <dbReference type="ChEBI" id="CHEBI:74480"/>
        <dbReference type="EC" id="2.1.1.170"/>
    </reaction>
</comment>
<comment type="subcellular location">
    <subcellularLocation>
        <location evidence="1">Cytoplasm</location>
    </subcellularLocation>
</comment>
<comment type="similarity">
    <text evidence="1">Belongs to the methyltransferase superfamily. RNA methyltransferase RsmG family.</text>
</comment>
<protein>
    <recommendedName>
        <fullName evidence="1">Ribosomal RNA small subunit methyltransferase G</fullName>
        <ecNumber evidence="1">2.1.1.170</ecNumber>
    </recommendedName>
    <alternativeName>
        <fullName evidence="1">16S rRNA 7-methylguanosine methyltransferase</fullName>
        <shortName evidence="1">16S rRNA m7G methyltransferase</shortName>
    </alternativeName>
</protein>
<sequence length="207" mass="23400">MLNKLSRLLEQAGISLTDHQKNQLVAYVDMLNKWNKAYNLTSVRDPNEMLIRHILDSIVVAPHLRGERFIDVGTGPGLPGIPLSIVRPECHFTLLDSLGKRVRFLRQVQHELKLENIEPVQSRVEAFPSEPPFDGVISRAFASLNDMVSWCKHLPAQDGRFYALKGLVPDDEIAQLPEGYSVESIAKLQVPQLEGERHLVVIKPNHF</sequence>
<dbReference type="EC" id="2.1.1.170" evidence="1"/>
<dbReference type="EMBL" id="CP000653">
    <property type="protein sequence ID" value="ABP62777.1"/>
    <property type="molecule type" value="Genomic_DNA"/>
</dbReference>
<dbReference type="RefSeq" id="WP_015961081.1">
    <property type="nucleotide sequence ID" value="NC_009436.1"/>
</dbReference>
<dbReference type="SMR" id="A4WGE7"/>
<dbReference type="STRING" id="399742.Ent638_4124"/>
<dbReference type="KEGG" id="ent:Ent638_4124"/>
<dbReference type="eggNOG" id="COG0357">
    <property type="taxonomic scope" value="Bacteria"/>
</dbReference>
<dbReference type="HOGENOM" id="CLU_065341_2_2_6"/>
<dbReference type="OrthoDB" id="9808773at2"/>
<dbReference type="Proteomes" id="UP000000230">
    <property type="component" value="Chromosome"/>
</dbReference>
<dbReference type="GO" id="GO:0005829">
    <property type="term" value="C:cytosol"/>
    <property type="evidence" value="ECO:0007669"/>
    <property type="project" value="TreeGrafter"/>
</dbReference>
<dbReference type="GO" id="GO:0070043">
    <property type="term" value="F:rRNA (guanine-N7-)-methyltransferase activity"/>
    <property type="evidence" value="ECO:0007669"/>
    <property type="project" value="UniProtKB-UniRule"/>
</dbReference>
<dbReference type="CDD" id="cd02440">
    <property type="entry name" value="AdoMet_MTases"/>
    <property type="match status" value="1"/>
</dbReference>
<dbReference type="FunFam" id="3.40.50.150:FF:000032">
    <property type="entry name" value="Ribosomal RNA small subunit methyltransferase G"/>
    <property type="match status" value="1"/>
</dbReference>
<dbReference type="Gene3D" id="3.40.50.150">
    <property type="entry name" value="Vaccinia Virus protein VP39"/>
    <property type="match status" value="1"/>
</dbReference>
<dbReference type="HAMAP" id="MF_00074">
    <property type="entry name" value="16SrRNA_methyltr_G"/>
    <property type="match status" value="1"/>
</dbReference>
<dbReference type="InterPro" id="IPR003682">
    <property type="entry name" value="rRNA_ssu_MeTfrase_G"/>
</dbReference>
<dbReference type="InterPro" id="IPR029063">
    <property type="entry name" value="SAM-dependent_MTases_sf"/>
</dbReference>
<dbReference type="NCBIfam" id="TIGR00138">
    <property type="entry name" value="rsmG_gidB"/>
    <property type="match status" value="1"/>
</dbReference>
<dbReference type="PANTHER" id="PTHR31760">
    <property type="entry name" value="S-ADENOSYL-L-METHIONINE-DEPENDENT METHYLTRANSFERASES SUPERFAMILY PROTEIN"/>
    <property type="match status" value="1"/>
</dbReference>
<dbReference type="PANTHER" id="PTHR31760:SF0">
    <property type="entry name" value="S-ADENOSYL-L-METHIONINE-DEPENDENT METHYLTRANSFERASES SUPERFAMILY PROTEIN"/>
    <property type="match status" value="1"/>
</dbReference>
<dbReference type="Pfam" id="PF02527">
    <property type="entry name" value="GidB"/>
    <property type="match status" value="1"/>
</dbReference>
<dbReference type="PIRSF" id="PIRSF003078">
    <property type="entry name" value="GidB"/>
    <property type="match status" value="1"/>
</dbReference>
<dbReference type="SUPFAM" id="SSF53335">
    <property type="entry name" value="S-adenosyl-L-methionine-dependent methyltransferases"/>
    <property type="match status" value="1"/>
</dbReference>